<dbReference type="EMBL" id="D14336">
    <property type="protein sequence ID" value="BAA03266.1"/>
    <property type="molecule type" value="mRNA"/>
</dbReference>
<dbReference type="EMBL" id="AK050780">
    <property type="protein sequence ID" value="BAC34409.1"/>
    <property type="molecule type" value="mRNA"/>
</dbReference>
<dbReference type="EMBL" id="AL824706">
    <property type="status" value="NOT_ANNOTATED_CDS"/>
    <property type="molecule type" value="Genomic_DNA"/>
</dbReference>
<dbReference type="EMBL" id="BC034783">
    <property type="protein sequence ID" value="AAH34783.1"/>
    <property type="molecule type" value="mRNA"/>
</dbReference>
<dbReference type="CCDS" id="CCDS18131.1">
    <molecule id="Q8K202-2"/>
</dbReference>
<dbReference type="CCDS" id="CCDS71378.1">
    <molecule id="Q8K202-1"/>
</dbReference>
<dbReference type="PIR" id="S69245">
    <property type="entry name" value="S69245"/>
</dbReference>
<dbReference type="RefSeq" id="NP_001272729.1">
    <molecule id="Q8K202-1"/>
    <property type="nucleotide sequence ID" value="NM_001285800.1"/>
</dbReference>
<dbReference type="RefSeq" id="NP_073722.1">
    <molecule id="Q8K202-2"/>
    <property type="nucleotide sequence ID" value="NM_022811.3"/>
</dbReference>
<dbReference type="SMR" id="Q8K202"/>
<dbReference type="BioGRID" id="211074">
    <property type="interactions" value="31"/>
</dbReference>
<dbReference type="FunCoup" id="Q8K202">
    <property type="interactions" value="1781"/>
</dbReference>
<dbReference type="STRING" id="10090.ENSMUSP00000029999"/>
<dbReference type="iPTMnet" id="Q8K202"/>
<dbReference type="PhosphoSitePlus" id="Q8K202"/>
<dbReference type="PaxDb" id="10090-ENSMUSP00000121007"/>
<dbReference type="PeptideAtlas" id="Q8K202"/>
<dbReference type="ProteomicsDB" id="301596">
    <molecule id="Q8K202-1"/>
</dbReference>
<dbReference type="ProteomicsDB" id="301597">
    <molecule id="Q8K202-2"/>
</dbReference>
<dbReference type="ProteomicsDB" id="301598">
    <molecule id="Q8K202-3"/>
</dbReference>
<dbReference type="Pumba" id="Q8K202"/>
<dbReference type="Antibodypedia" id="12019">
    <property type="antibodies" value="165 antibodies from 27 providers"/>
</dbReference>
<dbReference type="DNASU" id="64424"/>
<dbReference type="Ensembl" id="ENSMUST00000029999.15">
    <molecule id="Q8K202-1"/>
    <property type="protein sequence ID" value="ENSMUSP00000029999.9"/>
    <property type="gene ID" value="ENSMUSG00000028318.15"/>
</dbReference>
<dbReference type="Ensembl" id="ENSMUST00000107814.10">
    <molecule id="Q8K202-3"/>
    <property type="protein sequence ID" value="ENSMUSP00000103444.4"/>
    <property type="gene ID" value="ENSMUSG00000028318.15"/>
</dbReference>
<dbReference type="Ensembl" id="ENSMUST00000133157.8">
    <molecule id="Q8K202-2"/>
    <property type="protein sequence ID" value="ENSMUSP00000121007.2"/>
    <property type="gene ID" value="ENSMUSG00000028318.15"/>
</dbReference>
<dbReference type="GeneID" id="64424"/>
<dbReference type="KEGG" id="mmu:64424"/>
<dbReference type="UCSC" id="uc012ddk.2">
    <molecule id="Q8K202-1"/>
    <property type="organism name" value="mouse"/>
</dbReference>
<dbReference type="AGR" id="MGI:1929022"/>
<dbReference type="CTD" id="64425"/>
<dbReference type="MGI" id="MGI:1929022">
    <property type="gene designation" value="Polr1e"/>
</dbReference>
<dbReference type="VEuPathDB" id="HostDB:ENSMUSG00000028318"/>
<dbReference type="eggNOG" id="KOG4183">
    <property type="taxonomic scope" value="Eukaryota"/>
</dbReference>
<dbReference type="GeneTree" id="ENSGT00390000018004"/>
<dbReference type="InParanoid" id="Q8K202"/>
<dbReference type="OMA" id="DVYPFDE"/>
<dbReference type="OrthoDB" id="532500at2759"/>
<dbReference type="PhylomeDB" id="Q8K202"/>
<dbReference type="TreeFam" id="TF331685"/>
<dbReference type="Reactome" id="R-MMU-5250924">
    <property type="pathway name" value="B-WICH complex positively regulates rRNA expression"/>
</dbReference>
<dbReference type="Reactome" id="R-MMU-73762">
    <property type="pathway name" value="RNA Polymerase I Transcription Initiation"/>
</dbReference>
<dbReference type="Reactome" id="R-MMU-73772">
    <property type="pathway name" value="RNA Polymerase I Promoter Escape"/>
</dbReference>
<dbReference type="Reactome" id="R-MMU-73863">
    <property type="pathway name" value="RNA Polymerase I Transcription Termination"/>
</dbReference>
<dbReference type="BioGRID-ORCS" id="64424">
    <property type="hits" value="25 hits in 80 CRISPR screens"/>
</dbReference>
<dbReference type="ChiTaRS" id="Polr1e">
    <property type="organism name" value="mouse"/>
</dbReference>
<dbReference type="PRO" id="PR:Q8K202"/>
<dbReference type="Proteomes" id="UP000000589">
    <property type="component" value="Chromosome 4"/>
</dbReference>
<dbReference type="RNAct" id="Q8K202">
    <property type="molecule type" value="protein"/>
</dbReference>
<dbReference type="Bgee" id="ENSMUSG00000028318">
    <property type="expression patterns" value="Expressed in otic placode and 261 other cell types or tissues"/>
</dbReference>
<dbReference type="ExpressionAtlas" id="Q8K202">
    <property type="expression patterns" value="baseline and differential"/>
</dbReference>
<dbReference type="GO" id="GO:0001650">
    <property type="term" value="C:fibrillar center"/>
    <property type="evidence" value="ECO:0007669"/>
    <property type="project" value="Ensembl"/>
</dbReference>
<dbReference type="GO" id="GO:0005730">
    <property type="term" value="C:nucleolus"/>
    <property type="evidence" value="ECO:0000314"/>
    <property type="project" value="MGI"/>
</dbReference>
<dbReference type="GO" id="GO:0005654">
    <property type="term" value="C:nucleoplasm"/>
    <property type="evidence" value="ECO:0000304"/>
    <property type="project" value="Reactome"/>
</dbReference>
<dbReference type="GO" id="GO:0005736">
    <property type="term" value="C:RNA polymerase I complex"/>
    <property type="evidence" value="ECO:0000314"/>
    <property type="project" value="MGI"/>
</dbReference>
<dbReference type="GO" id="GO:0003677">
    <property type="term" value="F:DNA binding"/>
    <property type="evidence" value="ECO:0007669"/>
    <property type="project" value="InterPro"/>
</dbReference>
<dbReference type="GO" id="GO:0001179">
    <property type="term" value="F:RNA polymerase I general transcription initiation factor binding"/>
    <property type="evidence" value="ECO:0000314"/>
    <property type="project" value="MGI"/>
</dbReference>
<dbReference type="GO" id="GO:0042790">
    <property type="term" value="P:nucleolar large rRNA transcription by RNA polymerase I"/>
    <property type="evidence" value="ECO:0000250"/>
    <property type="project" value="UniProtKB"/>
</dbReference>
<dbReference type="GO" id="GO:0001188">
    <property type="term" value="P:RNA polymerase I preinitiation complex assembly"/>
    <property type="evidence" value="ECO:0000314"/>
    <property type="project" value="MGI"/>
</dbReference>
<dbReference type="InterPro" id="IPR009668">
    <property type="entry name" value="RNA_pol-assoc_fac_A49-like"/>
</dbReference>
<dbReference type="PANTHER" id="PTHR14440">
    <property type="entry name" value="DNA-DIRECTED RNA POLYMERASE I SUBUNIT RPA49"/>
    <property type="match status" value="1"/>
</dbReference>
<dbReference type="Pfam" id="PF06870">
    <property type="entry name" value="RNA_pol_I_A49"/>
    <property type="match status" value="1"/>
</dbReference>
<proteinExistence type="evidence at protein level"/>
<reference key="1">
    <citation type="journal article" date="1996" name="EMBO J.">
        <title>RNA polymerase I associated factor 53 binds to the nucleolar transcription factor UBF and functions in specific rDNA transcription.</title>
        <authorList>
            <person name="Hanada K."/>
            <person name="Song C.Z."/>
            <person name="Yamamoto K."/>
            <person name="Yano K."/>
            <person name="Maeda Y."/>
            <person name="Yamaguchi K."/>
            <person name="Muramatsu M."/>
        </authorList>
    </citation>
    <scope>NUCLEOTIDE SEQUENCE [MRNA] (ISOFORM 2)</scope>
    <scope>PROTEIN SEQUENCE OF 110-178 (ISOFORMS 2/3)</scope>
    <scope>PROTEIN SEQUENCE OF 222-230 AND 301-305</scope>
    <scope>FUNCTION</scope>
    <scope>SUBCELLULAR LOCATION</scope>
    <scope>INTERACTION WITH UBTF</scope>
</reference>
<reference key="2">
    <citation type="journal article" date="2005" name="Science">
        <title>The transcriptional landscape of the mammalian genome.</title>
        <authorList>
            <person name="Carninci P."/>
            <person name="Kasukawa T."/>
            <person name="Katayama S."/>
            <person name="Gough J."/>
            <person name="Frith M.C."/>
            <person name="Maeda N."/>
            <person name="Oyama R."/>
            <person name="Ravasi T."/>
            <person name="Lenhard B."/>
            <person name="Wells C."/>
            <person name="Kodzius R."/>
            <person name="Shimokawa K."/>
            <person name="Bajic V.B."/>
            <person name="Brenner S.E."/>
            <person name="Batalov S."/>
            <person name="Forrest A.R."/>
            <person name="Zavolan M."/>
            <person name="Davis M.J."/>
            <person name="Wilming L.G."/>
            <person name="Aidinis V."/>
            <person name="Allen J.E."/>
            <person name="Ambesi-Impiombato A."/>
            <person name="Apweiler R."/>
            <person name="Aturaliya R.N."/>
            <person name="Bailey T.L."/>
            <person name="Bansal M."/>
            <person name="Baxter L."/>
            <person name="Beisel K.W."/>
            <person name="Bersano T."/>
            <person name="Bono H."/>
            <person name="Chalk A.M."/>
            <person name="Chiu K.P."/>
            <person name="Choudhary V."/>
            <person name="Christoffels A."/>
            <person name="Clutterbuck D.R."/>
            <person name="Crowe M.L."/>
            <person name="Dalla E."/>
            <person name="Dalrymple B.P."/>
            <person name="de Bono B."/>
            <person name="Della Gatta G."/>
            <person name="di Bernardo D."/>
            <person name="Down T."/>
            <person name="Engstrom P."/>
            <person name="Fagiolini M."/>
            <person name="Faulkner G."/>
            <person name="Fletcher C.F."/>
            <person name="Fukushima T."/>
            <person name="Furuno M."/>
            <person name="Futaki S."/>
            <person name="Gariboldi M."/>
            <person name="Georgii-Hemming P."/>
            <person name="Gingeras T.R."/>
            <person name="Gojobori T."/>
            <person name="Green R.E."/>
            <person name="Gustincich S."/>
            <person name="Harbers M."/>
            <person name="Hayashi Y."/>
            <person name="Hensch T.K."/>
            <person name="Hirokawa N."/>
            <person name="Hill D."/>
            <person name="Huminiecki L."/>
            <person name="Iacono M."/>
            <person name="Ikeo K."/>
            <person name="Iwama A."/>
            <person name="Ishikawa T."/>
            <person name="Jakt M."/>
            <person name="Kanapin A."/>
            <person name="Katoh M."/>
            <person name="Kawasawa Y."/>
            <person name="Kelso J."/>
            <person name="Kitamura H."/>
            <person name="Kitano H."/>
            <person name="Kollias G."/>
            <person name="Krishnan S.P."/>
            <person name="Kruger A."/>
            <person name="Kummerfeld S.K."/>
            <person name="Kurochkin I.V."/>
            <person name="Lareau L.F."/>
            <person name="Lazarevic D."/>
            <person name="Lipovich L."/>
            <person name="Liu J."/>
            <person name="Liuni S."/>
            <person name="McWilliam S."/>
            <person name="Madan Babu M."/>
            <person name="Madera M."/>
            <person name="Marchionni L."/>
            <person name="Matsuda H."/>
            <person name="Matsuzawa S."/>
            <person name="Miki H."/>
            <person name="Mignone F."/>
            <person name="Miyake S."/>
            <person name="Morris K."/>
            <person name="Mottagui-Tabar S."/>
            <person name="Mulder N."/>
            <person name="Nakano N."/>
            <person name="Nakauchi H."/>
            <person name="Ng P."/>
            <person name="Nilsson R."/>
            <person name="Nishiguchi S."/>
            <person name="Nishikawa S."/>
            <person name="Nori F."/>
            <person name="Ohara O."/>
            <person name="Okazaki Y."/>
            <person name="Orlando V."/>
            <person name="Pang K.C."/>
            <person name="Pavan W.J."/>
            <person name="Pavesi G."/>
            <person name="Pesole G."/>
            <person name="Petrovsky N."/>
            <person name="Piazza S."/>
            <person name="Reed J."/>
            <person name="Reid J.F."/>
            <person name="Ring B.Z."/>
            <person name="Ringwald M."/>
            <person name="Rost B."/>
            <person name="Ruan Y."/>
            <person name="Salzberg S.L."/>
            <person name="Sandelin A."/>
            <person name="Schneider C."/>
            <person name="Schoenbach C."/>
            <person name="Sekiguchi K."/>
            <person name="Semple C.A."/>
            <person name="Seno S."/>
            <person name="Sessa L."/>
            <person name="Sheng Y."/>
            <person name="Shibata Y."/>
            <person name="Shimada H."/>
            <person name="Shimada K."/>
            <person name="Silva D."/>
            <person name="Sinclair B."/>
            <person name="Sperling S."/>
            <person name="Stupka E."/>
            <person name="Sugiura K."/>
            <person name="Sultana R."/>
            <person name="Takenaka Y."/>
            <person name="Taki K."/>
            <person name="Tammoja K."/>
            <person name="Tan S.L."/>
            <person name="Tang S."/>
            <person name="Taylor M.S."/>
            <person name="Tegner J."/>
            <person name="Teichmann S.A."/>
            <person name="Ueda H.R."/>
            <person name="van Nimwegen E."/>
            <person name="Verardo R."/>
            <person name="Wei C.L."/>
            <person name="Yagi K."/>
            <person name="Yamanishi H."/>
            <person name="Zabarovsky E."/>
            <person name="Zhu S."/>
            <person name="Zimmer A."/>
            <person name="Hide W."/>
            <person name="Bult C."/>
            <person name="Grimmond S.M."/>
            <person name="Teasdale R.D."/>
            <person name="Liu E.T."/>
            <person name="Brusic V."/>
            <person name="Quackenbush J."/>
            <person name="Wahlestedt C."/>
            <person name="Mattick J.S."/>
            <person name="Hume D.A."/>
            <person name="Kai C."/>
            <person name="Sasaki D."/>
            <person name="Tomaru Y."/>
            <person name="Fukuda S."/>
            <person name="Kanamori-Katayama M."/>
            <person name="Suzuki M."/>
            <person name="Aoki J."/>
            <person name="Arakawa T."/>
            <person name="Iida J."/>
            <person name="Imamura K."/>
            <person name="Itoh M."/>
            <person name="Kato T."/>
            <person name="Kawaji H."/>
            <person name="Kawagashira N."/>
            <person name="Kawashima T."/>
            <person name="Kojima M."/>
            <person name="Kondo S."/>
            <person name="Konno H."/>
            <person name="Nakano K."/>
            <person name="Ninomiya N."/>
            <person name="Nishio T."/>
            <person name="Okada M."/>
            <person name="Plessy C."/>
            <person name="Shibata K."/>
            <person name="Shiraki T."/>
            <person name="Suzuki S."/>
            <person name="Tagami M."/>
            <person name="Waki K."/>
            <person name="Watahiki A."/>
            <person name="Okamura-Oho Y."/>
            <person name="Suzuki H."/>
            <person name="Kawai J."/>
            <person name="Hayashizaki Y."/>
        </authorList>
    </citation>
    <scope>NUCLEOTIDE SEQUENCE [LARGE SCALE MRNA] (ISOFORM 3)</scope>
    <source>
        <strain>C57BL/6J</strain>
        <tissue>Embryo</tissue>
    </source>
</reference>
<reference key="3">
    <citation type="journal article" date="2009" name="PLoS Biol.">
        <title>Lineage-specific biology revealed by a finished genome assembly of the mouse.</title>
        <authorList>
            <person name="Church D.M."/>
            <person name="Goodstadt L."/>
            <person name="Hillier L.W."/>
            <person name="Zody M.C."/>
            <person name="Goldstein S."/>
            <person name="She X."/>
            <person name="Bult C.J."/>
            <person name="Agarwala R."/>
            <person name="Cherry J.L."/>
            <person name="DiCuccio M."/>
            <person name="Hlavina W."/>
            <person name="Kapustin Y."/>
            <person name="Meric P."/>
            <person name="Maglott D."/>
            <person name="Birtle Z."/>
            <person name="Marques A.C."/>
            <person name="Graves T."/>
            <person name="Zhou S."/>
            <person name="Teague B."/>
            <person name="Potamousis K."/>
            <person name="Churas C."/>
            <person name="Place M."/>
            <person name="Herschleb J."/>
            <person name="Runnheim R."/>
            <person name="Forrest D."/>
            <person name="Amos-Landgraf J."/>
            <person name="Schwartz D.C."/>
            <person name="Cheng Z."/>
            <person name="Lindblad-Toh K."/>
            <person name="Eichler E.E."/>
            <person name="Ponting C.P."/>
        </authorList>
    </citation>
    <scope>NUCLEOTIDE SEQUENCE [LARGE SCALE GENOMIC DNA]</scope>
    <source>
        <strain>C57BL/6J</strain>
    </source>
</reference>
<reference key="4">
    <citation type="journal article" date="2004" name="Genome Res.">
        <title>The status, quality, and expansion of the NIH full-length cDNA project: the Mammalian Gene Collection (MGC).</title>
        <authorList>
            <consortium name="The MGC Project Team"/>
        </authorList>
    </citation>
    <scope>NUCLEOTIDE SEQUENCE [LARGE SCALE MRNA] (ISOFORM 1)</scope>
    <source>
        <strain>Czech II</strain>
        <tissue>Mammary tumor</tissue>
    </source>
</reference>
<reference key="5">
    <citation type="journal article" date="1997" name="Chromosoma">
        <title>Constitutive and strong association of PAF53 with RNA polymerase I.</title>
        <authorList>
            <person name="Seither P."/>
            <person name="Zatsepina O."/>
            <person name="Hoffmann M."/>
            <person name="Grummt I."/>
        </authorList>
    </citation>
    <scope>FUNCTION</scope>
    <scope>IDENTIFICATION IN THE DNA-DIRECTED RNA POLYMERASE I COMPLEX</scope>
    <scope>SUBCELLULAR LOCATION</scope>
</reference>
<reference key="6">
    <citation type="journal article" date="2004" name="Mol. Cell. Biol.">
        <title>Multiple protein-protein interactions by RNA polymerase I-associated factor PAF49 and role of PAF49 in rRNA transcription.</title>
        <authorList>
            <person name="Yamamoto K."/>
            <person name="Yamamoto M."/>
            <person name="Hanada K."/>
            <person name="Nogi Y."/>
            <person name="Matsuyama T."/>
            <person name="Muramatsu M."/>
        </authorList>
    </citation>
    <scope>INTERACTION WITH POLR1G</scope>
</reference>
<name>RPA49_MOUSE</name>
<accession>Q8K202</accession>
<accession>B1AXQ6</accession>
<accession>B1AXQ7</accession>
<accession>Q62034</accession>
<accession>Q8BQG9</accession>
<gene>
    <name type="primary">Polr1e</name>
    <name type="synonym">Paf53</name>
    <name type="synonym">Praf1</name>
</gene>
<evidence type="ECO:0000250" key="1">
    <source>
        <dbReference type="UniProtKB" id="Q9GZS1"/>
    </source>
</evidence>
<evidence type="ECO:0000256" key="2">
    <source>
        <dbReference type="SAM" id="MobiDB-lite"/>
    </source>
</evidence>
<evidence type="ECO:0000269" key="3">
    <source>
    </source>
</evidence>
<evidence type="ECO:0000269" key="4">
    <source>
    </source>
</evidence>
<evidence type="ECO:0000269" key="5">
    <source>
    </source>
</evidence>
<evidence type="ECO:0000303" key="6">
    <source>
    </source>
</evidence>
<evidence type="ECO:0000303" key="7">
    <source>
    </source>
</evidence>
<evidence type="ECO:0000305" key="8"/>
<feature type="chain" id="PRO_0000073957" description="DNA-directed RNA polymerase I subunit RPA49">
    <location>
        <begin position="1"/>
        <end position="482"/>
    </location>
</feature>
<feature type="region of interest" description="Disordered" evidence="2">
    <location>
        <begin position="460"/>
        <end position="482"/>
    </location>
</feature>
<feature type="modified residue" description="Phosphoserine" evidence="1">
    <location>
        <position position="226"/>
    </location>
</feature>
<feature type="modified residue" description="N6-acetyllysine" evidence="1">
    <location>
        <position position="436"/>
    </location>
</feature>
<feature type="splice variant" id="VSP_013536" description="In isoform 2 and isoform 3." evidence="6 7">
    <location>
        <begin position="130"/>
        <end position="177"/>
    </location>
</feature>
<feature type="splice variant" id="VSP_013537" description="In isoform 3." evidence="6">
    <original>MIEIAKAMRLK</original>
    <variation>PSTSSSSWIWI</variation>
    <location>
        <begin position="431"/>
        <end position="441"/>
    </location>
</feature>
<feature type="splice variant" id="VSP_013538" description="In isoform 3." evidence="6">
    <location>
        <begin position="442"/>
        <end position="482"/>
    </location>
</feature>
<feature type="sequence conflict" description="In Ref. 4; AAH34783." evidence="8" ref="4">
    <original>T</original>
    <variation>A</variation>
    <location>
        <position position="3"/>
    </location>
</feature>
<feature type="sequence conflict" description="In Ref. 4; AAH34783." evidence="8" ref="4">
    <original>DGV</original>
    <variation>YDA</variation>
    <location>
        <begin position="258"/>
        <end position="260"/>
    </location>
</feature>
<feature type="sequence conflict" description="In Ref. 4; AAH34783." evidence="8" ref="4">
    <original>M</original>
    <variation>Y</variation>
    <location>
        <position position="431"/>
    </location>
</feature>
<organism>
    <name type="scientific">Mus musculus</name>
    <name type="common">Mouse</name>
    <dbReference type="NCBI Taxonomy" id="10090"/>
    <lineage>
        <taxon>Eukaryota</taxon>
        <taxon>Metazoa</taxon>
        <taxon>Chordata</taxon>
        <taxon>Craniata</taxon>
        <taxon>Vertebrata</taxon>
        <taxon>Euteleostomi</taxon>
        <taxon>Mammalia</taxon>
        <taxon>Eutheria</taxon>
        <taxon>Euarchontoglires</taxon>
        <taxon>Glires</taxon>
        <taxon>Rodentia</taxon>
        <taxon>Myomorpha</taxon>
        <taxon>Muroidea</taxon>
        <taxon>Muridae</taxon>
        <taxon>Murinae</taxon>
        <taxon>Mus</taxon>
        <taxon>Mus</taxon>
    </lineage>
</organism>
<protein>
    <recommendedName>
        <fullName>DNA-directed RNA polymerase I subunit RPA49</fullName>
        <shortName>RNA polymerase I subunit A49</shortName>
    </recommendedName>
    <alternativeName>
        <fullName>DNA-directed RNA polymerase I subunit E</fullName>
    </alternativeName>
    <alternativeName>
        <fullName>RNA polymerase I-associated factor 1</fullName>
    </alternativeName>
    <alternativeName>
        <fullName>RNA polymerase I-associated factor 53</fullName>
    </alternativeName>
</protein>
<comment type="function">
    <text evidence="4 5">Component of RNA polymerase I (Pol I), a DNA-dependent RNA polymerase which synthesizes ribosomal RNA precursors using the four ribonucleoside triphosphates as substrates (PubMed:8641287, PubMed:9254723). Appears to be involved in the formation of the initiation complex at the promoter by mediating the interaction between Pol I and UBTF/UBF (PubMed:8641287).</text>
</comment>
<comment type="subunit">
    <text evidence="1 3 4 5">Component of the RNA polymerase I (Pol I) complex consisting of 13 subunits: a ten-subunit catalytic core composed of POLR1A/RPA1, POLR1B/RPA2, POLR1C/RPAC1, POLR1D/RPAC2, POLR1H/RPA12, POLR2E/RPABC1, POLR2F/RPABC2, POLR2H/RPABC3, POLR2K/RPABC4 and POLR2L/RPABC5; a mobile stalk subunit POLR1F/RPA43 protruding from the core and additional subunits homologous to general transcription factors POLR1E/RPA49 and POLR1G/RPA34. Forms a heterodimer with POLR1G/RPA34 (PubMed:9254723). Interacts with POLR1G (PubMed:15226435). Also binds UBTF/UBF (PubMed:8641287). Interacts with PWP1 (By similarity).</text>
</comment>
<comment type="subcellular location">
    <subcellularLocation>
        <location evidence="4 5">Nucleus</location>
        <location evidence="4 5">Nucleolus</location>
    </subcellularLocation>
</comment>
<comment type="alternative products">
    <event type="alternative splicing"/>
    <isoform>
        <id>Q8K202-1</id>
        <name>1</name>
        <sequence type="displayed"/>
    </isoform>
    <isoform>
        <id>Q8K202-2</id>
        <name>2</name>
        <sequence type="described" ref="VSP_013536"/>
    </isoform>
    <isoform>
        <id>Q8K202-3</id>
        <name>3</name>
        <sequence type="described" ref="VSP_013536 VSP_013537 VSP_013538"/>
    </isoform>
</comment>
<comment type="PTM">
    <text evidence="1">Acetylated at Lys-436 by CREBBP/CBP, leading to decreased RNA polymerase I transcription. In normal conditions, deacetylated by SIRT7, promoting the association of RNA polymerase I with the rDNA promoter region and coding region. In response to stress, SIRT7 is released from nucleoli leading to hyperacetylation of POLR1E/PAF53 and decreased association of RNA polymerase I with the rDNA promoter region.</text>
</comment>
<comment type="similarity">
    <text evidence="8">Belongs to the eukaryotic RPA49/POLR1E RNA polymerase subunit family.</text>
</comment>
<keyword id="KW-0007">Acetylation</keyword>
<keyword id="KW-0025">Alternative splicing</keyword>
<keyword id="KW-0903">Direct protein sequencing</keyword>
<keyword id="KW-0240">DNA-directed RNA polymerase</keyword>
<keyword id="KW-0539">Nucleus</keyword>
<keyword id="KW-0597">Phosphoprotein</keyword>
<keyword id="KW-1185">Reference proteome</keyword>
<keyword id="KW-0804">Transcription</keyword>
<sequence>MATLESPGMDDQAGDTETEALQSARWLYCGEPDDRQKAVLVQFSNGKLQNPGDMRFTLYNSTDLVNPRQRSHRIVAAETDRLSYVGNNFGTGALKCNALCRHFVGILNKTSGQMEVYDAELFNMQPLFAGMGTEVIKLGGQHLYLLAFCQPSKNLAEAGDLLLSRHRQGHCIAVLLDDDAIEREPPLENQNKTFRDKLDSCIEAFGSTKQKRSLNSRRMNKVGSESLNLSVAKAAESIIDTKGVNALVSDAMQDDLQDGVLYLPPCYADAAKPEDVYRFEDILSPAEYDALESPSEAFRKVTSEDILKMIEENSHCSYVIEMLKSLPIDEVHRNRQARSIWFLDALIRFRAQKVIKGKRALGPGIPHIINTKLLKQFTCLTYNNGRLQNLISSSMRAKITSYAIILALHINNFQVDLTALQKDLKLSEKRMIEIAKAMRLKISKQKVSLADGREESHRLGTLSVPLPPAQNSDRQSKRRKMN</sequence>